<evidence type="ECO:0000255" key="1">
    <source>
        <dbReference type="HAMAP-Rule" id="MF_01209"/>
    </source>
</evidence>
<keyword id="KW-0028">Amino-acid biosynthesis</keyword>
<keyword id="KW-0055">Arginine biosynthesis</keyword>
<keyword id="KW-0067">ATP-binding</keyword>
<keyword id="KW-0315">Glutamine amidotransferase</keyword>
<keyword id="KW-0436">Ligase</keyword>
<keyword id="KW-0547">Nucleotide-binding</keyword>
<keyword id="KW-0665">Pyrimidine biosynthesis</keyword>
<keyword id="KW-1185">Reference proteome</keyword>
<gene>
    <name evidence="1" type="primary">carA</name>
    <name type="ordered locus">WIGBR0240</name>
</gene>
<dbReference type="EC" id="6.3.5.5" evidence="1"/>
<dbReference type="EMBL" id="BA000021">
    <property type="protein sequence ID" value="BAC24170.1"/>
    <property type="molecule type" value="Genomic_DNA"/>
</dbReference>
<dbReference type="SMR" id="Q8D3H7"/>
<dbReference type="STRING" id="36870.gene:10368502"/>
<dbReference type="KEGG" id="wbr:carA"/>
<dbReference type="eggNOG" id="COG0505">
    <property type="taxonomic scope" value="Bacteria"/>
</dbReference>
<dbReference type="HOGENOM" id="CLU_035901_2_1_6"/>
<dbReference type="OrthoDB" id="9804328at2"/>
<dbReference type="UniPathway" id="UPA00068">
    <property type="reaction ID" value="UER00171"/>
</dbReference>
<dbReference type="UniPathway" id="UPA00070">
    <property type="reaction ID" value="UER00115"/>
</dbReference>
<dbReference type="Proteomes" id="UP000000562">
    <property type="component" value="Chromosome"/>
</dbReference>
<dbReference type="GO" id="GO:0005524">
    <property type="term" value="F:ATP binding"/>
    <property type="evidence" value="ECO:0007669"/>
    <property type="project" value="UniProtKB-UniRule"/>
</dbReference>
<dbReference type="GO" id="GO:0004088">
    <property type="term" value="F:carbamoyl-phosphate synthase (glutamine-hydrolyzing) activity"/>
    <property type="evidence" value="ECO:0007669"/>
    <property type="project" value="UniProtKB-UniRule"/>
</dbReference>
<dbReference type="GO" id="GO:0004359">
    <property type="term" value="F:glutaminase activity"/>
    <property type="evidence" value="ECO:0007669"/>
    <property type="project" value="RHEA"/>
</dbReference>
<dbReference type="GO" id="GO:0006207">
    <property type="term" value="P:'de novo' pyrimidine nucleobase biosynthetic process"/>
    <property type="evidence" value="ECO:0007669"/>
    <property type="project" value="InterPro"/>
</dbReference>
<dbReference type="GO" id="GO:0044205">
    <property type="term" value="P:'de novo' UMP biosynthetic process"/>
    <property type="evidence" value="ECO:0007669"/>
    <property type="project" value="UniProtKB-UniRule"/>
</dbReference>
<dbReference type="GO" id="GO:0006541">
    <property type="term" value="P:glutamine metabolic process"/>
    <property type="evidence" value="ECO:0007669"/>
    <property type="project" value="InterPro"/>
</dbReference>
<dbReference type="GO" id="GO:0006526">
    <property type="term" value="P:L-arginine biosynthetic process"/>
    <property type="evidence" value="ECO:0007669"/>
    <property type="project" value="UniProtKB-UniRule"/>
</dbReference>
<dbReference type="CDD" id="cd01744">
    <property type="entry name" value="GATase1_CPSase"/>
    <property type="match status" value="1"/>
</dbReference>
<dbReference type="FunFam" id="3.50.30.20:FF:000001">
    <property type="entry name" value="Carbamoyl-phosphate synthase small chain"/>
    <property type="match status" value="1"/>
</dbReference>
<dbReference type="Gene3D" id="3.40.50.880">
    <property type="match status" value="1"/>
</dbReference>
<dbReference type="Gene3D" id="3.50.30.20">
    <property type="entry name" value="Carbamoyl-phosphate synthase small subunit, N-terminal domain"/>
    <property type="match status" value="1"/>
</dbReference>
<dbReference type="HAMAP" id="MF_01209">
    <property type="entry name" value="CPSase_S_chain"/>
    <property type="match status" value="1"/>
</dbReference>
<dbReference type="InterPro" id="IPR050472">
    <property type="entry name" value="Anth_synth/Amidotransfase"/>
</dbReference>
<dbReference type="InterPro" id="IPR006274">
    <property type="entry name" value="CarbamoylP_synth_ssu"/>
</dbReference>
<dbReference type="InterPro" id="IPR002474">
    <property type="entry name" value="CarbamoylP_synth_ssu_N"/>
</dbReference>
<dbReference type="InterPro" id="IPR036480">
    <property type="entry name" value="CarbP_synth_ssu_N_sf"/>
</dbReference>
<dbReference type="InterPro" id="IPR029062">
    <property type="entry name" value="Class_I_gatase-like"/>
</dbReference>
<dbReference type="InterPro" id="IPR035686">
    <property type="entry name" value="CPSase_GATase1"/>
</dbReference>
<dbReference type="InterPro" id="IPR017926">
    <property type="entry name" value="GATASE"/>
</dbReference>
<dbReference type="NCBIfam" id="TIGR01368">
    <property type="entry name" value="CPSaseIIsmall"/>
    <property type="match status" value="1"/>
</dbReference>
<dbReference type="NCBIfam" id="NF009475">
    <property type="entry name" value="PRK12838.1"/>
    <property type="match status" value="1"/>
</dbReference>
<dbReference type="PANTHER" id="PTHR43418:SF7">
    <property type="entry name" value="CARBAMOYL-PHOSPHATE SYNTHASE SMALL CHAIN"/>
    <property type="match status" value="1"/>
</dbReference>
<dbReference type="PANTHER" id="PTHR43418">
    <property type="entry name" value="MULTIFUNCTIONAL TRYPTOPHAN BIOSYNTHESIS PROTEIN-RELATED"/>
    <property type="match status" value="1"/>
</dbReference>
<dbReference type="Pfam" id="PF00988">
    <property type="entry name" value="CPSase_sm_chain"/>
    <property type="match status" value="1"/>
</dbReference>
<dbReference type="Pfam" id="PF00117">
    <property type="entry name" value="GATase"/>
    <property type="match status" value="1"/>
</dbReference>
<dbReference type="PRINTS" id="PR00097">
    <property type="entry name" value="ANTSNTHASEII"/>
</dbReference>
<dbReference type="PRINTS" id="PR00099">
    <property type="entry name" value="CPSGATASE"/>
</dbReference>
<dbReference type="PRINTS" id="PR00096">
    <property type="entry name" value="GATASE"/>
</dbReference>
<dbReference type="SMART" id="SM01097">
    <property type="entry name" value="CPSase_sm_chain"/>
    <property type="match status" value="1"/>
</dbReference>
<dbReference type="SUPFAM" id="SSF52021">
    <property type="entry name" value="Carbamoyl phosphate synthetase, small subunit N-terminal domain"/>
    <property type="match status" value="1"/>
</dbReference>
<dbReference type="SUPFAM" id="SSF52317">
    <property type="entry name" value="Class I glutamine amidotransferase-like"/>
    <property type="match status" value="1"/>
</dbReference>
<dbReference type="PROSITE" id="PS51273">
    <property type="entry name" value="GATASE_TYPE_1"/>
    <property type="match status" value="1"/>
</dbReference>
<reference key="1">
    <citation type="journal article" date="2002" name="Nat. Genet.">
        <title>Genome sequence of the endocellular obligate symbiont of tsetse flies, Wigglesworthia glossinidia.</title>
        <authorList>
            <person name="Akman L."/>
            <person name="Yamashita A."/>
            <person name="Watanabe H."/>
            <person name="Oshima K."/>
            <person name="Shiba T."/>
            <person name="Hattori M."/>
            <person name="Aksoy S."/>
        </authorList>
    </citation>
    <scope>NUCLEOTIDE SEQUENCE [LARGE SCALE GENOMIC DNA]</scope>
</reference>
<organism>
    <name type="scientific">Wigglesworthia glossinidia brevipalpis</name>
    <dbReference type="NCBI Taxonomy" id="36870"/>
    <lineage>
        <taxon>Bacteria</taxon>
        <taxon>Pseudomonadati</taxon>
        <taxon>Pseudomonadota</taxon>
        <taxon>Gammaproteobacteria</taxon>
        <taxon>Enterobacterales</taxon>
        <taxon>Erwiniaceae</taxon>
        <taxon>Wigglesworthia</taxon>
    </lineage>
</organism>
<accession>Q8D3H7</accession>
<sequence>MENILLNKALLILEDGTKFYGNSIGAKGTSIGEVIFNTSITGYQEIITDPSYFNQIVAFTYPHIGNIGIEINNNESSKIQVKAVILYQTHNIISDFRNKLSFSRFLLLNNIIGISGIDTRKLTRLIRKSGTQYGYVSSEGTNINFKEIKSKIKIFLEKKNLDLVKLVTTKRKIIYKKKYIEKNFFYNIVAYDFGIKFSIIKNLINLGCRITLVPATTKSKYVISLNPDGILLSNGPGNPEIYKYAIRNIQCLLETKIPIFGICLGHQLLAIANGAKILKMKFGHHGSNHPVKDLETNKIIITSQNHDFAIDKSTLSKNIIITHISMFDQTLQGIKLINKPVFSFQGHPESSPGPKDALFLFKNFINLVKDYRLNKK</sequence>
<comment type="function">
    <text evidence="1">Small subunit of the glutamine-dependent carbamoyl phosphate synthetase (CPSase). CPSase catalyzes the formation of carbamoyl phosphate from the ammonia moiety of glutamine, carbonate, and phosphate donated by ATP, constituting the first step of 2 biosynthetic pathways, one leading to arginine and/or urea and the other to pyrimidine nucleotides. The small subunit (glutamine amidotransferase) binds and cleaves glutamine to supply the large subunit with the substrate ammonia.</text>
</comment>
<comment type="catalytic activity">
    <reaction evidence="1">
        <text>hydrogencarbonate + L-glutamine + 2 ATP + H2O = carbamoyl phosphate + L-glutamate + 2 ADP + phosphate + 2 H(+)</text>
        <dbReference type="Rhea" id="RHEA:18633"/>
        <dbReference type="ChEBI" id="CHEBI:15377"/>
        <dbReference type="ChEBI" id="CHEBI:15378"/>
        <dbReference type="ChEBI" id="CHEBI:17544"/>
        <dbReference type="ChEBI" id="CHEBI:29985"/>
        <dbReference type="ChEBI" id="CHEBI:30616"/>
        <dbReference type="ChEBI" id="CHEBI:43474"/>
        <dbReference type="ChEBI" id="CHEBI:58228"/>
        <dbReference type="ChEBI" id="CHEBI:58359"/>
        <dbReference type="ChEBI" id="CHEBI:456216"/>
        <dbReference type="EC" id="6.3.5.5"/>
    </reaction>
</comment>
<comment type="catalytic activity">
    <molecule>Carbamoyl phosphate synthase small chain</molecule>
    <reaction evidence="1">
        <text>L-glutamine + H2O = L-glutamate + NH4(+)</text>
        <dbReference type="Rhea" id="RHEA:15889"/>
        <dbReference type="ChEBI" id="CHEBI:15377"/>
        <dbReference type="ChEBI" id="CHEBI:28938"/>
        <dbReference type="ChEBI" id="CHEBI:29985"/>
        <dbReference type="ChEBI" id="CHEBI:58359"/>
    </reaction>
</comment>
<comment type="pathway">
    <text evidence="1">Amino-acid biosynthesis; L-arginine biosynthesis; carbamoyl phosphate from bicarbonate: step 1/1.</text>
</comment>
<comment type="pathway">
    <text evidence="1">Pyrimidine metabolism; UMP biosynthesis via de novo pathway; (S)-dihydroorotate from bicarbonate: step 1/3.</text>
</comment>
<comment type="subunit">
    <text evidence="1">Composed of two chains; the small (or glutamine) chain promotes the hydrolysis of glutamine to ammonia, which is used by the large (or ammonia) chain to synthesize carbamoyl phosphate. Tetramer of heterodimers (alpha,beta)4.</text>
</comment>
<comment type="similarity">
    <text evidence="1">Belongs to the CarA family.</text>
</comment>
<name>CARA_WIGBR</name>
<proteinExistence type="inferred from homology"/>
<feature type="chain" id="PRO_0000112347" description="Carbamoyl phosphate synthase small chain">
    <location>
        <begin position="1"/>
        <end position="376"/>
    </location>
</feature>
<feature type="domain" description="Glutamine amidotransferase type-1" evidence="1">
    <location>
        <begin position="187"/>
        <end position="374"/>
    </location>
</feature>
<feature type="region of interest" description="CPSase" evidence="1">
    <location>
        <begin position="1"/>
        <end position="183"/>
    </location>
</feature>
<feature type="active site" description="Nucleophile" evidence="1">
    <location>
        <position position="263"/>
    </location>
</feature>
<feature type="active site" evidence="1">
    <location>
        <position position="347"/>
    </location>
</feature>
<feature type="active site" evidence="1">
    <location>
        <position position="349"/>
    </location>
</feature>
<feature type="binding site" evidence="1">
    <location>
        <position position="51"/>
    </location>
    <ligand>
        <name>L-glutamine</name>
        <dbReference type="ChEBI" id="CHEBI:58359"/>
    </ligand>
</feature>
<feature type="binding site" evidence="1">
    <location>
        <position position="235"/>
    </location>
    <ligand>
        <name>L-glutamine</name>
        <dbReference type="ChEBI" id="CHEBI:58359"/>
    </ligand>
</feature>
<feature type="binding site" evidence="1">
    <location>
        <position position="237"/>
    </location>
    <ligand>
        <name>L-glutamine</name>
        <dbReference type="ChEBI" id="CHEBI:58359"/>
    </ligand>
</feature>
<feature type="binding site" evidence="1">
    <location>
        <position position="264"/>
    </location>
    <ligand>
        <name>L-glutamine</name>
        <dbReference type="ChEBI" id="CHEBI:58359"/>
    </ligand>
</feature>
<feature type="binding site" evidence="1">
    <location>
        <position position="267"/>
    </location>
    <ligand>
        <name>L-glutamine</name>
        <dbReference type="ChEBI" id="CHEBI:58359"/>
    </ligand>
</feature>
<feature type="binding site" evidence="1">
    <location>
        <position position="305"/>
    </location>
    <ligand>
        <name>L-glutamine</name>
        <dbReference type="ChEBI" id="CHEBI:58359"/>
    </ligand>
</feature>
<feature type="binding site" evidence="1">
    <location>
        <position position="308"/>
    </location>
    <ligand>
        <name>L-glutamine</name>
        <dbReference type="ChEBI" id="CHEBI:58359"/>
    </ligand>
</feature>
<protein>
    <recommendedName>
        <fullName evidence="1">Carbamoyl phosphate synthase small chain</fullName>
        <ecNumber evidence="1">6.3.5.5</ecNumber>
    </recommendedName>
    <alternativeName>
        <fullName evidence="1">Carbamoyl phosphate synthetase glutamine chain</fullName>
    </alternativeName>
</protein>